<dbReference type="EC" id="4.2.1.17" evidence="1"/>
<dbReference type="EC" id="5.1.2.3" evidence="1"/>
<dbReference type="EC" id="5.3.3.8" evidence="1"/>
<dbReference type="EC" id="1.1.1.35" evidence="1"/>
<dbReference type="EMBL" id="CP000644">
    <property type="protein sequence ID" value="ABO92174.1"/>
    <property type="molecule type" value="Genomic_DNA"/>
</dbReference>
<dbReference type="RefSeq" id="WP_005320561.1">
    <property type="nucleotide sequence ID" value="NC_009348.1"/>
</dbReference>
<dbReference type="SMR" id="A4STF2"/>
<dbReference type="STRING" id="29491.GCA_000820065_02847"/>
<dbReference type="KEGG" id="asa:ASA_4250"/>
<dbReference type="PATRIC" id="fig|382245.13.peg.4215"/>
<dbReference type="eggNOG" id="COG1024">
    <property type="taxonomic scope" value="Bacteria"/>
</dbReference>
<dbReference type="eggNOG" id="COG1250">
    <property type="taxonomic scope" value="Bacteria"/>
</dbReference>
<dbReference type="HOGENOM" id="CLU_009834_16_3_6"/>
<dbReference type="UniPathway" id="UPA00659"/>
<dbReference type="Proteomes" id="UP000000225">
    <property type="component" value="Chromosome"/>
</dbReference>
<dbReference type="GO" id="GO:0036125">
    <property type="term" value="C:fatty acid beta-oxidation multienzyme complex"/>
    <property type="evidence" value="ECO:0007669"/>
    <property type="project" value="InterPro"/>
</dbReference>
<dbReference type="GO" id="GO:0008692">
    <property type="term" value="F:3-hydroxybutyryl-CoA epimerase activity"/>
    <property type="evidence" value="ECO:0007669"/>
    <property type="project" value="UniProtKB-UniRule"/>
</dbReference>
<dbReference type="GO" id="GO:0004165">
    <property type="term" value="F:delta(3)-delta(2)-enoyl-CoA isomerase activity"/>
    <property type="evidence" value="ECO:0007669"/>
    <property type="project" value="UniProtKB-UniRule"/>
</dbReference>
<dbReference type="GO" id="GO:0004300">
    <property type="term" value="F:enoyl-CoA hydratase activity"/>
    <property type="evidence" value="ECO:0007669"/>
    <property type="project" value="UniProtKB-UniRule"/>
</dbReference>
<dbReference type="GO" id="GO:0016509">
    <property type="term" value="F:long-chain-3-hydroxyacyl-CoA dehydrogenase activity"/>
    <property type="evidence" value="ECO:0007669"/>
    <property type="project" value="TreeGrafter"/>
</dbReference>
<dbReference type="GO" id="GO:0070403">
    <property type="term" value="F:NAD+ binding"/>
    <property type="evidence" value="ECO:0007669"/>
    <property type="project" value="InterPro"/>
</dbReference>
<dbReference type="GO" id="GO:0006635">
    <property type="term" value="P:fatty acid beta-oxidation"/>
    <property type="evidence" value="ECO:0007669"/>
    <property type="project" value="UniProtKB-UniRule"/>
</dbReference>
<dbReference type="CDD" id="cd06558">
    <property type="entry name" value="crotonase-like"/>
    <property type="match status" value="1"/>
</dbReference>
<dbReference type="FunFam" id="1.10.1040.50:FF:000001">
    <property type="entry name" value="Fatty acid oxidation complex subunit alpha"/>
    <property type="match status" value="1"/>
</dbReference>
<dbReference type="FunFam" id="3.40.50.720:FF:000009">
    <property type="entry name" value="Fatty oxidation complex, alpha subunit"/>
    <property type="match status" value="1"/>
</dbReference>
<dbReference type="Gene3D" id="1.10.1040.50">
    <property type="match status" value="1"/>
</dbReference>
<dbReference type="Gene3D" id="3.90.226.10">
    <property type="entry name" value="2-enoyl-CoA Hydratase, Chain A, domain 1"/>
    <property type="match status" value="1"/>
</dbReference>
<dbReference type="Gene3D" id="3.40.50.720">
    <property type="entry name" value="NAD(P)-binding Rossmann-like Domain"/>
    <property type="match status" value="1"/>
</dbReference>
<dbReference type="HAMAP" id="MF_01621">
    <property type="entry name" value="FadB"/>
    <property type="match status" value="1"/>
</dbReference>
<dbReference type="InterPro" id="IPR006180">
    <property type="entry name" value="3-OHacyl-CoA_DH_CS"/>
</dbReference>
<dbReference type="InterPro" id="IPR006176">
    <property type="entry name" value="3-OHacyl-CoA_DH_NAD-bd"/>
</dbReference>
<dbReference type="InterPro" id="IPR006108">
    <property type="entry name" value="3HC_DH_C"/>
</dbReference>
<dbReference type="InterPro" id="IPR008927">
    <property type="entry name" value="6-PGluconate_DH-like_C_sf"/>
</dbReference>
<dbReference type="InterPro" id="IPR029045">
    <property type="entry name" value="ClpP/crotonase-like_dom_sf"/>
</dbReference>
<dbReference type="InterPro" id="IPR001753">
    <property type="entry name" value="Enoyl-CoA_hydra/iso"/>
</dbReference>
<dbReference type="InterPro" id="IPR050136">
    <property type="entry name" value="FA_oxidation_alpha_subunit"/>
</dbReference>
<dbReference type="InterPro" id="IPR012799">
    <property type="entry name" value="FadB"/>
</dbReference>
<dbReference type="InterPro" id="IPR036291">
    <property type="entry name" value="NAD(P)-bd_dom_sf"/>
</dbReference>
<dbReference type="NCBIfam" id="TIGR02437">
    <property type="entry name" value="FadB"/>
    <property type="match status" value="1"/>
</dbReference>
<dbReference type="NCBIfam" id="NF008727">
    <property type="entry name" value="PRK11730.1"/>
    <property type="match status" value="1"/>
</dbReference>
<dbReference type="PANTHER" id="PTHR43612">
    <property type="entry name" value="TRIFUNCTIONAL ENZYME SUBUNIT ALPHA"/>
    <property type="match status" value="1"/>
</dbReference>
<dbReference type="PANTHER" id="PTHR43612:SF3">
    <property type="entry name" value="TRIFUNCTIONAL ENZYME SUBUNIT ALPHA, MITOCHONDRIAL"/>
    <property type="match status" value="1"/>
</dbReference>
<dbReference type="Pfam" id="PF00725">
    <property type="entry name" value="3HCDH"/>
    <property type="match status" value="2"/>
</dbReference>
<dbReference type="Pfam" id="PF02737">
    <property type="entry name" value="3HCDH_N"/>
    <property type="match status" value="1"/>
</dbReference>
<dbReference type="Pfam" id="PF00378">
    <property type="entry name" value="ECH_1"/>
    <property type="match status" value="1"/>
</dbReference>
<dbReference type="SUPFAM" id="SSF48179">
    <property type="entry name" value="6-phosphogluconate dehydrogenase C-terminal domain-like"/>
    <property type="match status" value="2"/>
</dbReference>
<dbReference type="SUPFAM" id="SSF52096">
    <property type="entry name" value="ClpP/crotonase"/>
    <property type="match status" value="1"/>
</dbReference>
<dbReference type="SUPFAM" id="SSF51735">
    <property type="entry name" value="NAD(P)-binding Rossmann-fold domains"/>
    <property type="match status" value="1"/>
</dbReference>
<dbReference type="PROSITE" id="PS00067">
    <property type="entry name" value="3HCDH"/>
    <property type="match status" value="1"/>
</dbReference>
<sequence>MIYQGETLSVSYLENGIAELRFDAPGSVNKLDRATLLSLSEAIAALQQQADLKGLILTSGKDAFIVGADITEFLELFDLPQEDLLGWLKKANDIFSAIEDLPVPTLSAIKGHALGGGCETILSTDFRLADTSAKIGLPETKLGIMPGFGGTVRLPRVIGADNALEWITTGKDYRADDALKVGAIDAVVAPDALHSAAVQMMKDAIAGKLNWQSRRAAKKAPLRLSKLEAMMSFSTAAGMVAAVAGKHYPAPMTAVKTVEAAAGMSRDEALVVEAQGFIKLAKTDVAKALVGIFLNDQHIKALAKKAAKQAAKATRHAAVLGAGIMGGGIAYQSASKGIPAVMKDINEKALALGMGEATKLLNGQLEKGRIDGIKMGQVLSAITPTLSYDNVKHVDLVVEAVVENPKVKAAVLGEVEGIIGDDAVLASNTSTIPISLLAKGLKRPQNFCGMHFFNPVHRMPLVEIIRGEQTSDETINRVVAYAAAMGKSPVVVNDCPGFFVNRVLFPYFFGFNKLVADGADFAAVDKVMEKEFGWPMGPAYLLDVVGIDTGHHAGDVMAQGFPARMSKEGRTAIDVMYDASRFGQKNGKGFYAYEQDKKGKPKKVADVAAYELLAPIAKPKQDFDKEAIIAGMMIPMINEVVLCLEEGIVATPAEADIALVYGLGFPPFRGGVFRYLDTIGLDRYVAMADQYADLGPLYRVSDRLREMAAQGKTFY</sequence>
<evidence type="ECO:0000255" key="1">
    <source>
        <dbReference type="HAMAP-Rule" id="MF_01621"/>
    </source>
</evidence>
<gene>
    <name evidence="1" type="primary">fadB</name>
    <name type="ordered locus">ASA_4250</name>
</gene>
<keyword id="KW-0276">Fatty acid metabolism</keyword>
<keyword id="KW-0413">Isomerase</keyword>
<keyword id="KW-0442">Lipid degradation</keyword>
<keyword id="KW-0443">Lipid metabolism</keyword>
<keyword id="KW-0456">Lyase</keyword>
<keyword id="KW-0511">Multifunctional enzyme</keyword>
<keyword id="KW-0520">NAD</keyword>
<keyword id="KW-0560">Oxidoreductase</keyword>
<comment type="function">
    <text evidence="1">Involved in the aerobic and anaerobic degradation of long-chain fatty acids via beta-oxidation cycle. Catalyzes the formation of 3-oxoacyl-CoA from enoyl-CoA via L-3-hydroxyacyl-CoA. It can also use D-3-hydroxyacyl-CoA and cis-3-enoyl-CoA as substrate.</text>
</comment>
<comment type="catalytic activity">
    <reaction evidence="1">
        <text>a (3S)-3-hydroxyacyl-CoA + NAD(+) = a 3-oxoacyl-CoA + NADH + H(+)</text>
        <dbReference type="Rhea" id="RHEA:22432"/>
        <dbReference type="ChEBI" id="CHEBI:15378"/>
        <dbReference type="ChEBI" id="CHEBI:57318"/>
        <dbReference type="ChEBI" id="CHEBI:57540"/>
        <dbReference type="ChEBI" id="CHEBI:57945"/>
        <dbReference type="ChEBI" id="CHEBI:90726"/>
        <dbReference type="EC" id="1.1.1.35"/>
    </reaction>
</comment>
<comment type="catalytic activity">
    <reaction evidence="1">
        <text>a (3S)-3-hydroxyacyl-CoA = a (2E)-enoyl-CoA + H2O</text>
        <dbReference type="Rhea" id="RHEA:16105"/>
        <dbReference type="ChEBI" id="CHEBI:15377"/>
        <dbReference type="ChEBI" id="CHEBI:57318"/>
        <dbReference type="ChEBI" id="CHEBI:58856"/>
        <dbReference type="EC" id="4.2.1.17"/>
    </reaction>
</comment>
<comment type="catalytic activity">
    <reaction evidence="1">
        <text>a 4-saturated-(3S)-3-hydroxyacyl-CoA = a (3E)-enoyl-CoA + H2O</text>
        <dbReference type="Rhea" id="RHEA:20724"/>
        <dbReference type="ChEBI" id="CHEBI:15377"/>
        <dbReference type="ChEBI" id="CHEBI:58521"/>
        <dbReference type="ChEBI" id="CHEBI:137480"/>
        <dbReference type="EC" id="4.2.1.17"/>
    </reaction>
</comment>
<comment type="catalytic activity">
    <reaction evidence="1">
        <text>(3S)-3-hydroxybutanoyl-CoA = (3R)-3-hydroxybutanoyl-CoA</text>
        <dbReference type="Rhea" id="RHEA:21760"/>
        <dbReference type="ChEBI" id="CHEBI:57315"/>
        <dbReference type="ChEBI" id="CHEBI:57316"/>
        <dbReference type="EC" id="5.1.2.3"/>
    </reaction>
</comment>
<comment type="catalytic activity">
    <reaction evidence="1">
        <text>a (3Z)-enoyl-CoA = a 4-saturated (2E)-enoyl-CoA</text>
        <dbReference type="Rhea" id="RHEA:45900"/>
        <dbReference type="ChEBI" id="CHEBI:85097"/>
        <dbReference type="ChEBI" id="CHEBI:85489"/>
        <dbReference type="EC" id="5.3.3.8"/>
    </reaction>
</comment>
<comment type="catalytic activity">
    <reaction evidence="1">
        <text>a (3E)-enoyl-CoA = a 4-saturated (2E)-enoyl-CoA</text>
        <dbReference type="Rhea" id="RHEA:45228"/>
        <dbReference type="ChEBI" id="CHEBI:58521"/>
        <dbReference type="ChEBI" id="CHEBI:85097"/>
        <dbReference type="EC" id="5.3.3.8"/>
    </reaction>
</comment>
<comment type="pathway">
    <text evidence="1">Lipid metabolism; fatty acid beta-oxidation.</text>
</comment>
<comment type="subunit">
    <text evidence="1">Heterotetramer of two alpha chains (FadB) and two beta chains (FadA).</text>
</comment>
<comment type="similarity">
    <text evidence="1">In the N-terminal section; belongs to the enoyl-CoA hydratase/isomerase family.</text>
</comment>
<comment type="similarity">
    <text evidence="1">In the C-terminal section; belongs to the 3-hydroxyacyl-CoA dehydrogenase family.</text>
</comment>
<accession>A4STF2</accession>
<reference key="1">
    <citation type="journal article" date="2008" name="BMC Genomics">
        <title>The genome of Aeromonas salmonicida subsp. salmonicida A449: insights into the evolution of a fish pathogen.</title>
        <authorList>
            <person name="Reith M.E."/>
            <person name="Singh R.K."/>
            <person name="Curtis B."/>
            <person name="Boyd J.M."/>
            <person name="Bouevitch A."/>
            <person name="Kimball J."/>
            <person name="Munholland J."/>
            <person name="Murphy C."/>
            <person name="Sarty D."/>
            <person name="Williams J."/>
            <person name="Nash J.H."/>
            <person name="Johnson S.C."/>
            <person name="Brown L.L."/>
        </authorList>
    </citation>
    <scope>NUCLEOTIDE SEQUENCE [LARGE SCALE GENOMIC DNA]</scope>
    <source>
        <strain>A449</strain>
    </source>
</reference>
<feature type="chain" id="PRO_1000069558" description="Fatty acid oxidation complex subunit alpha">
    <location>
        <begin position="1"/>
        <end position="715"/>
    </location>
</feature>
<feature type="region of interest" description="Enoyl-CoA hydratase/isomerase" evidence="1">
    <location>
        <begin position="1"/>
        <end position="189"/>
    </location>
</feature>
<feature type="region of interest" description="3-hydroxyacyl-CoA dehydrogenase" evidence="1">
    <location>
        <begin position="311"/>
        <end position="715"/>
    </location>
</feature>
<feature type="active site" description="For 3-hydroxyacyl-CoA dehydrogenase activity" evidence="1">
    <location>
        <position position="451"/>
    </location>
</feature>
<feature type="binding site" evidence="1">
    <location>
        <position position="296"/>
    </location>
    <ligand>
        <name>substrate</name>
    </ligand>
</feature>
<feature type="binding site" evidence="1">
    <location>
        <position position="325"/>
    </location>
    <ligand>
        <name>NAD(+)</name>
        <dbReference type="ChEBI" id="CHEBI:57540"/>
    </ligand>
</feature>
<feature type="binding site" evidence="1">
    <location>
        <position position="344"/>
    </location>
    <ligand>
        <name>NAD(+)</name>
        <dbReference type="ChEBI" id="CHEBI:57540"/>
    </ligand>
</feature>
<feature type="binding site" evidence="1">
    <location>
        <begin position="401"/>
        <end position="403"/>
    </location>
    <ligand>
        <name>NAD(+)</name>
        <dbReference type="ChEBI" id="CHEBI:57540"/>
    </ligand>
</feature>
<feature type="binding site" evidence="1">
    <location>
        <position position="408"/>
    </location>
    <ligand>
        <name>NAD(+)</name>
        <dbReference type="ChEBI" id="CHEBI:57540"/>
    </ligand>
</feature>
<feature type="binding site" evidence="1">
    <location>
        <position position="430"/>
    </location>
    <ligand>
        <name>NAD(+)</name>
        <dbReference type="ChEBI" id="CHEBI:57540"/>
    </ligand>
</feature>
<feature type="binding site" evidence="1">
    <location>
        <position position="454"/>
    </location>
    <ligand>
        <name>NAD(+)</name>
        <dbReference type="ChEBI" id="CHEBI:57540"/>
    </ligand>
</feature>
<feature type="binding site" evidence="1">
    <location>
        <position position="501"/>
    </location>
    <ligand>
        <name>substrate</name>
    </ligand>
</feature>
<feature type="binding site" evidence="1">
    <location>
        <position position="661"/>
    </location>
    <ligand>
        <name>substrate</name>
    </ligand>
</feature>
<feature type="site" description="Important for catalytic activity" evidence="1">
    <location>
        <position position="119"/>
    </location>
</feature>
<feature type="site" description="Important for catalytic activity" evidence="1">
    <location>
        <position position="139"/>
    </location>
</feature>
<name>FADB_AERS4</name>
<organism>
    <name type="scientific">Aeromonas salmonicida (strain A449)</name>
    <dbReference type="NCBI Taxonomy" id="382245"/>
    <lineage>
        <taxon>Bacteria</taxon>
        <taxon>Pseudomonadati</taxon>
        <taxon>Pseudomonadota</taxon>
        <taxon>Gammaproteobacteria</taxon>
        <taxon>Aeromonadales</taxon>
        <taxon>Aeromonadaceae</taxon>
        <taxon>Aeromonas</taxon>
    </lineage>
</organism>
<protein>
    <recommendedName>
        <fullName evidence="1">Fatty acid oxidation complex subunit alpha</fullName>
    </recommendedName>
    <domain>
        <recommendedName>
            <fullName evidence="1">Enoyl-CoA hydratase/Delta(3)-cis-Delta(2)-trans-enoyl-CoA isomerase/3-hydroxybutyryl-CoA epimerase</fullName>
            <ecNumber evidence="1">4.2.1.17</ecNumber>
            <ecNumber evidence="1">5.1.2.3</ecNumber>
            <ecNumber evidence="1">5.3.3.8</ecNumber>
        </recommendedName>
    </domain>
    <domain>
        <recommendedName>
            <fullName evidence="1">3-hydroxyacyl-CoA dehydrogenase</fullName>
            <ecNumber evidence="1">1.1.1.35</ecNumber>
        </recommendedName>
    </domain>
</protein>
<proteinExistence type="inferred from homology"/>